<comment type="function">
    <text evidence="1">Endonuclease that specifically degrades the RNA of RNA-DNA hybrids.</text>
</comment>
<comment type="catalytic activity">
    <reaction evidence="1">
        <text>Endonucleolytic cleavage to 5'-phosphomonoester.</text>
        <dbReference type="EC" id="3.1.26.4"/>
    </reaction>
</comment>
<comment type="cofactor">
    <cofactor evidence="1">
        <name>Mn(2+)</name>
        <dbReference type="ChEBI" id="CHEBI:29035"/>
    </cofactor>
    <cofactor evidence="1">
        <name>Mg(2+)</name>
        <dbReference type="ChEBI" id="CHEBI:18420"/>
    </cofactor>
    <text evidence="1">Manganese or magnesium. Binds 1 divalent metal ion per monomer in the absence of substrate. May bind a second metal ion after substrate binding.</text>
</comment>
<comment type="subcellular location">
    <subcellularLocation>
        <location evidence="1">Cytoplasm</location>
    </subcellularLocation>
</comment>
<comment type="similarity">
    <text evidence="1">Belongs to the RNase HII family.</text>
</comment>
<gene>
    <name evidence="1" type="primary">rnhB</name>
    <name type="ordered locus">MmarC5_0204</name>
</gene>
<reference key="1">
    <citation type="submission" date="2007-03" db="EMBL/GenBank/DDBJ databases">
        <title>Complete sequence of chromosome of Methanococcus maripaludis C5.</title>
        <authorList>
            <consortium name="US DOE Joint Genome Institute"/>
            <person name="Copeland A."/>
            <person name="Lucas S."/>
            <person name="Lapidus A."/>
            <person name="Barry K."/>
            <person name="Glavina del Rio T."/>
            <person name="Dalin E."/>
            <person name="Tice H."/>
            <person name="Pitluck S."/>
            <person name="Chertkov O."/>
            <person name="Brettin T."/>
            <person name="Bruce D."/>
            <person name="Han C."/>
            <person name="Detter J.C."/>
            <person name="Schmutz J."/>
            <person name="Larimer F."/>
            <person name="Land M."/>
            <person name="Hauser L."/>
            <person name="Kyrpides N."/>
            <person name="Mikhailova N."/>
            <person name="Sieprawska-Lupa M."/>
            <person name="Whitman W.B."/>
            <person name="Richardson P."/>
        </authorList>
    </citation>
    <scope>NUCLEOTIDE SEQUENCE [LARGE SCALE GENOMIC DNA]</scope>
    <source>
        <strain>C5 / ATCC BAA-1333</strain>
    </source>
</reference>
<evidence type="ECO:0000255" key="1">
    <source>
        <dbReference type="HAMAP-Rule" id="MF_00052"/>
    </source>
</evidence>
<evidence type="ECO:0000255" key="2">
    <source>
        <dbReference type="PROSITE-ProRule" id="PRU01319"/>
    </source>
</evidence>
<organism>
    <name type="scientific">Methanococcus maripaludis (strain C5 / ATCC BAA-1333)</name>
    <dbReference type="NCBI Taxonomy" id="402880"/>
    <lineage>
        <taxon>Archaea</taxon>
        <taxon>Methanobacteriati</taxon>
        <taxon>Methanobacteriota</taxon>
        <taxon>Methanomada group</taxon>
        <taxon>Methanococci</taxon>
        <taxon>Methanococcales</taxon>
        <taxon>Methanococcaceae</taxon>
        <taxon>Methanococcus</taxon>
    </lineage>
</organism>
<dbReference type="EC" id="3.1.26.4" evidence="1"/>
<dbReference type="EMBL" id="CP000609">
    <property type="protein sequence ID" value="ABO34520.1"/>
    <property type="molecule type" value="Genomic_DNA"/>
</dbReference>
<dbReference type="RefSeq" id="WP_011867978.1">
    <property type="nucleotide sequence ID" value="NC_009135.1"/>
</dbReference>
<dbReference type="SMR" id="A4FWE5"/>
<dbReference type="STRING" id="402880.MmarC5_0204"/>
<dbReference type="GeneID" id="4928181"/>
<dbReference type="KEGG" id="mmq:MmarC5_0204"/>
<dbReference type="eggNOG" id="arCOG04121">
    <property type="taxonomic scope" value="Archaea"/>
</dbReference>
<dbReference type="HOGENOM" id="CLU_036532_0_4_2"/>
<dbReference type="OrthoDB" id="33866at2157"/>
<dbReference type="Proteomes" id="UP000000253">
    <property type="component" value="Chromosome"/>
</dbReference>
<dbReference type="GO" id="GO:0005737">
    <property type="term" value="C:cytoplasm"/>
    <property type="evidence" value="ECO:0007669"/>
    <property type="project" value="UniProtKB-SubCell"/>
</dbReference>
<dbReference type="GO" id="GO:0032299">
    <property type="term" value="C:ribonuclease H2 complex"/>
    <property type="evidence" value="ECO:0007669"/>
    <property type="project" value="TreeGrafter"/>
</dbReference>
<dbReference type="GO" id="GO:0030145">
    <property type="term" value="F:manganese ion binding"/>
    <property type="evidence" value="ECO:0007669"/>
    <property type="project" value="UniProtKB-UniRule"/>
</dbReference>
<dbReference type="GO" id="GO:0003723">
    <property type="term" value="F:RNA binding"/>
    <property type="evidence" value="ECO:0007669"/>
    <property type="project" value="InterPro"/>
</dbReference>
<dbReference type="GO" id="GO:0004523">
    <property type="term" value="F:RNA-DNA hybrid ribonuclease activity"/>
    <property type="evidence" value="ECO:0007669"/>
    <property type="project" value="UniProtKB-UniRule"/>
</dbReference>
<dbReference type="GO" id="GO:0043137">
    <property type="term" value="P:DNA replication, removal of RNA primer"/>
    <property type="evidence" value="ECO:0007669"/>
    <property type="project" value="TreeGrafter"/>
</dbReference>
<dbReference type="GO" id="GO:0006298">
    <property type="term" value="P:mismatch repair"/>
    <property type="evidence" value="ECO:0007669"/>
    <property type="project" value="TreeGrafter"/>
</dbReference>
<dbReference type="CDD" id="cd07180">
    <property type="entry name" value="RNase_HII_archaea_like"/>
    <property type="match status" value="1"/>
</dbReference>
<dbReference type="FunFam" id="1.10.10.460:FF:000001">
    <property type="entry name" value="Ribonuclease"/>
    <property type="match status" value="1"/>
</dbReference>
<dbReference type="Gene3D" id="3.30.420.10">
    <property type="entry name" value="Ribonuclease H-like superfamily/Ribonuclease H"/>
    <property type="match status" value="1"/>
</dbReference>
<dbReference type="Gene3D" id="1.10.10.460">
    <property type="entry name" value="Ribonuclease hii. Domain 2"/>
    <property type="match status" value="1"/>
</dbReference>
<dbReference type="HAMAP" id="MF_00052_A">
    <property type="entry name" value="RNase_HII_A"/>
    <property type="match status" value="1"/>
</dbReference>
<dbReference type="InterPro" id="IPR004649">
    <property type="entry name" value="RNase_H2_suA"/>
</dbReference>
<dbReference type="InterPro" id="IPR001352">
    <property type="entry name" value="RNase_HII/HIII"/>
</dbReference>
<dbReference type="InterPro" id="IPR024567">
    <property type="entry name" value="RNase_HII/HIII_dom"/>
</dbReference>
<dbReference type="InterPro" id="IPR020787">
    <property type="entry name" value="RNase_HII_arc"/>
</dbReference>
<dbReference type="InterPro" id="IPR023160">
    <property type="entry name" value="RNase_HII_hlx-loop-hlx_cap_dom"/>
</dbReference>
<dbReference type="InterPro" id="IPR012337">
    <property type="entry name" value="RNaseH-like_sf"/>
</dbReference>
<dbReference type="InterPro" id="IPR036397">
    <property type="entry name" value="RNaseH_sf"/>
</dbReference>
<dbReference type="NCBIfam" id="TIGR00729">
    <property type="entry name" value="ribonuclease HII"/>
    <property type="match status" value="1"/>
</dbReference>
<dbReference type="PANTHER" id="PTHR10954:SF23">
    <property type="entry name" value="RIBONUCLEASE"/>
    <property type="match status" value="1"/>
</dbReference>
<dbReference type="PANTHER" id="PTHR10954">
    <property type="entry name" value="RIBONUCLEASE H2 SUBUNIT A"/>
    <property type="match status" value="1"/>
</dbReference>
<dbReference type="Pfam" id="PF01351">
    <property type="entry name" value="RNase_HII"/>
    <property type="match status" value="1"/>
</dbReference>
<dbReference type="SUPFAM" id="SSF53098">
    <property type="entry name" value="Ribonuclease H-like"/>
    <property type="match status" value="1"/>
</dbReference>
<dbReference type="PROSITE" id="PS51975">
    <property type="entry name" value="RNASE_H_2"/>
    <property type="match status" value="1"/>
</dbReference>
<proteinExistence type="inferred from homology"/>
<protein>
    <recommendedName>
        <fullName evidence="1">Ribonuclease HII</fullName>
        <shortName evidence="1">RNase HII</shortName>
        <ecNumber evidence="1">3.1.26.4</ecNumber>
    </recommendedName>
</protein>
<sequence length="239" mass="27111">MNEDIKNNLNNSDESNGKIIVGLDEAGRGPVIGPMVIASVKINEKDLPRLDDLGLRDSKQLSKKKREELYTKISEICDVKKVVINPEKIDEQMEIINLNKIELGAFSKLANHFIKENENISIYIDACSSNEQSFSNQFKAKLINKNVEIIAEHKADENYKIVSAASIIAKVTRDNVIEEYKKTFGEIGSGYPSDPKTKKFLKNYVHENKGLPKIARKSWATSKNLLKEIEESKIFQWVK</sequence>
<name>RNH2_METM5</name>
<accession>A4FWE5</accession>
<feature type="chain" id="PRO_0000334980" description="Ribonuclease HII">
    <location>
        <begin position="1"/>
        <end position="239"/>
    </location>
</feature>
<feature type="domain" description="RNase H type-2" evidence="2">
    <location>
        <begin position="18"/>
        <end position="231"/>
    </location>
</feature>
<feature type="binding site" evidence="1">
    <location>
        <position position="24"/>
    </location>
    <ligand>
        <name>a divalent metal cation</name>
        <dbReference type="ChEBI" id="CHEBI:60240"/>
    </ligand>
</feature>
<feature type="binding site" evidence="1">
    <location>
        <position position="25"/>
    </location>
    <ligand>
        <name>a divalent metal cation</name>
        <dbReference type="ChEBI" id="CHEBI:60240"/>
    </ligand>
</feature>
<feature type="binding site" evidence="1">
    <location>
        <position position="125"/>
    </location>
    <ligand>
        <name>a divalent metal cation</name>
        <dbReference type="ChEBI" id="CHEBI:60240"/>
    </ligand>
</feature>
<keyword id="KW-0963">Cytoplasm</keyword>
<keyword id="KW-0255">Endonuclease</keyword>
<keyword id="KW-0378">Hydrolase</keyword>
<keyword id="KW-0464">Manganese</keyword>
<keyword id="KW-0479">Metal-binding</keyword>
<keyword id="KW-0540">Nuclease</keyword>